<organism>
    <name type="scientific">Arabidopsis thaliana</name>
    <name type="common">Mouse-ear cress</name>
    <dbReference type="NCBI Taxonomy" id="3702"/>
    <lineage>
        <taxon>Eukaryota</taxon>
        <taxon>Viridiplantae</taxon>
        <taxon>Streptophyta</taxon>
        <taxon>Embryophyta</taxon>
        <taxon>Tracheophyta</taxon>
        <taxon>Spermatophyta</taxon>
        <taxon>Magnoliopsida</taxon>
        <taxon>eudicotyledons</taxon>
        <taxon>Gunneridae</taxon>
        <taxon>Pentapetalae</taxon>
        <taxon>rosids</taxon>
        <taxon>malvids</taxon>
        <taxon>Brassicales</taxon>
        <taxon>Brassicaceae</taxon>
        <taxon>Camelineae</taxon>
        <taxon>Arabidopsis</taxon>
    </lineage>
</organism>
<dbReference type="EC" id="2.4.1.-"/>
<dbReference type="EC" id="2.4.1.91"/>
<dbReference type="EMBL" id="AL161584">
    <property type="status" value="NOT_ANNOTATED_CDS"/>
    <property type="molecule type" value="Genomic_DNA"/>
</dbReference>
<dbReference type="EMBL" id="CP002687">
    <property type="protein sequence ID" value="AEE86327.1"/>
    <property type="molecule type" value="Genomic_DNA"/>
</dbReference>
<dbReference type="EMBL" id="AY062753">
    <property type="protein sequence ID" value="AAL32831.1"/>
    <property type="molecule type" value="mRNA"/>
</dbReference>
<dbReference type="EMBL" id="AY114680">
    <property type="protein sequence ID" value="AAM47999.1"/>
    <property type="molecule type" value="mRNA"/>
</dbReference>
<dbReference type="RefSeq" id="NP_567953.1">
    <property type="nucleotide sequence ID" value="NM_119574.3"/>
</dbReference>
<dbReference type="SMR" id="Q8W491"/>
<dbReference type="FunCoup" id="Q8W491">
    <property type="interactions" value="188"/>
</dbReference>
<dbReference type="STRING" id="3702.Q8W491"/>
<dbReference type="CAZy" id="GT1">
    <property type="family name" value="Glycosyltransferase Family 1"/>
</dbReference>
<dbReference type="iPTMnet" id="Q8W491"/>
<dbReference type="PaxDb" id="3702-AT4G34131.1"/>
<dbReference type="ProteomicsDB" id="228558"/>
<dbReference type="EnsemblPlants" id="AT4G34131.1">
    <property type="protein sequence ID" value="AT4G34131.1"/>
    <property type="gene ID" value="AT4G34131"/>
</dbReference>
<dbReference type="GeneID" id="829559"/>
<dbReference type="Gramene" id="AT4G34131.1">
    <property type="protein sequence ID" value="AT4G34131.1"/>
    <property type="gene ID" value="AT4G34131"/>
</dbReference>
<dbReference type="KEGG" id="ath:AT4G34131"/>
<dbReference type="Araport" id="AT4G34131"/>
<dbReference type="TAIR" id="AT4G34131">
    <property type="gene designation" value="UGT73B3"/>
</dbReference>
<dbReference type="eggNOG" id="KOG1192">
    <property type="taxonomic scope" value="Eukaryota"/>
</dbReference>
<dbReference type="HOGENOM" id="CLU_001724_2_2_1"/>
<dbReference type="InParanoid" id="Q8W491"/>
<dbReference type="OMA" id="TIEFPCA"/>
<dbReference type="PhylomeDB" id="Q8W491"/>
<dbReference type="PRO" id="PR:Q8W491"/>
<dbReference type="Proteomes" id="UP000006548">
    <property type="component" value="Chromosome 4"/>
</dbReference>
<dbReference type="ExpressionAtlas" id="Q8W491">
    <property type="expression patterns" value="baseline and differential"/>
</dbReference>
<dbReference type="GO" id="GO:0047893">
    <property type="term" value="F:flavonol 3-O-glucosyltransferase activity"/>
    <property type="evidence" value="ECO:0007669"/>
    <property type="project" value="UniProtKB-EC"/>
</dbReference>
<dbReference type="GO" id="GO:0080043">
    <property type="term" value="F:quercetin 3-O-glucosyltransferase activity"/>
    <property type="evidence" value="ECO:0000314"/>
    <property type="project" value="TAIR"/>
</dbReference>
<dbReference type="GO" id="GO:0035251">
    <property type="term" value="F:UDP-glucosyltransferase activity"/>
    <property type="evidence" value="ECO:0000314"/>
    <property type="project" value="TAIR"/>
</dbReference>
<dbReference type="GO" id="GO:0071456">
    <property type="term" value="P:cellular response to hypoxia"/>
    <property type="evidence" value="ECO:0007007"/>
    <property type="project" value="TAIR"/>
</dbReference>
<dbReference type="GO" id="GO:0006952">
    <property type="term" value="P:defense response"/>
    <property type="evidence" value="ECO:0007669"/>
    <property type="project" value="UniProtKB-KW"/>
</dbReference>
<dbReference type="GO" id="GO:0051707">
    <property type="term" value="P:response to other organism"/>
    <property type="evidence" value="ECO:0000315"/>
    <property type="project" value="TAIR"/>
</dbReference>
<dbReference type="CDD" id="cd03784">
    <property type="entry name" value="GT1_Gtf-like"/>
    <property type="match status" value="1"/>
</dbReference>
<dbReference type="FunFam" id="3.40.50.2000:FF:000047">
    <property type="entry name" value="Glycosyltransferase"/>
    <property type="match status" value="1"/>
</dbReference>
<dbReference type="FunFam" id="3.40.50.2000:FF:000071">
    <property type="entry name" value="Glycosyltransferase"/>
    <property type="match status" value="1"/>
</dbReference>
<dbReference type="Gene3D" id="3.40.50.2000">
    <property type="entry name" value="Glycogen Phosphorylase B"/>
    <property type="match status" value="2"/>
</dbReference>
<dbReference type="InterPro" id="IPR002213">
    <property type="entry name" value="UDP_glucos_trans"/>
</dbReference>
<dbReference type="InterPro" id="IPR035595">
    <property type="entry name" value="UDP_glycos_trans_CS"/>
</dbReference>
<dbReference type="PANTHER" id="PTHR48047">
    <property type="entry name" value="GLYCOSYLTRANSFERASE"/>
    <property type="match status" value="1"/>
</dbReference>
<dbReference type="PANTHER" id="PTHR48047:SF45">
    <property type="entry name" value="SCOPOLETIN GLUCOSYLTRANSFERASE-LIKE"/>
    <property type="match status" value="1"/>
</dbReference>
<dbReference type="Pfam" id="PF00201">
    <property type="entry name" value="UDPGT"/>
    <property type="match status" value="1"/>
</dbReference>
<dbReference type="SUPFAM" id="SSF53756">
    <property type="entry name" value="UDP-Glycosyltransferase/glycogen phosphorylase"/>
    <property type="match status" value="1"/>
</dbReference>
<dbReference type="PROSITE" id="PS00375">
    <property type="entry name" value="UDPGT"/>
    <property type="match status" value="1"/>
</dbReference>
<keyword id="KW-0328">Glycosyltransferase</keyword>
<keyword id="KW-0611">Plant defense</keyword>
<keyword id="KW-1185">Reference proteome</keyword>
<keyword id="KW-0808">Transferase</keyword>
<gene>
    <name type="primary">UGT73B3</name>
    <name type="ordered locus">At4g34131</name>
    <name type="ORF">F28A23.120</name>
</gene>
<proteinExistence type="evidence at transcript level"/>
<evidence type="ECO:0000250" key="1">
    <source>
        <dbReference type="UniProtKB" id="A0A0A1HA03"/>
    </source>
</evidence>
<evidence type="ECO:0000250" key="2">
    <source>
        <dbReference type="UniProtKB" id="P51094"/>
    </source>
</evidence>
<evidence type="ECO:0000269" key="3">
    <source>
    </source>
</evidence>
<evidence type="ECO:0000269" key="4">
    <source>
    </source>
</evidence>
<evidence type="ECO:0000269" key="5">
    <source>
    </source>
</evidence>
<evidence type="ECO:0000305" key="6"/>
<accession>Q8W491</accession>
<comment type="function">
    <text evidence="3 4 5">Possesses quercetin 3-O-glucosyltransferase activity in vitro. Also active in vitro on benzoates and benzoate derivatives. Involved in stress or defense responses.</text>
</comment>
<comment type="catalytic activity">
    <reaction>
        <text>a flavonol + UDP-alpha-D-glucose = a flavonol 3-O-beta-D-glucoside + UDP + H(+)</text>
        <dbReference type="Rhea" id="RHEA:22300"/>
        <dbReference type="ChEBI" id="CHEBI:15378"/>
        <dbReference type="ChEBI" id="CHEBI:16816"/>
        <dbReference type="ChEBI" id="CHEBI:28802"/>
        <dbReference type="ChEBI" id="CHEBI:58223"/>
        <dbReference type="ChEBI" id="CHEBI:58885"/>
        <dbReference type="EC" id="2.4.1.91"/>
    </reaction>
</comment>
<comment type="tissue specificity">
    <text evidence="5">Expressed in roots and flowers.</text>
</comment>
<comment type="induction">
    <text evidence="5">Induced by pathogen infection, by H(2)O(2) and by salicylic acid.</text>
</comment>
<comment type="disruption phenotype">
    <text evidence="5">Decreased resistance to avirulent strains of P.syringae.</text>
</comment>
<comment type="similarity">
    <text evidence="6">Belongs to the UDP-glycosyltransferase family.</text>
</comment>
<reference key="1">
    <citation type="journal article" date="1999" name="Nature">
        <title>Sequence and analysis of chromosome 4 of the plant Arabidopsis thaliana.</title>
        <authorList>
            <person name="Mayer K.F.X."/>
            <person name="Schueller C."/>
            <person name="Wambutt R."/>
            <person name="Murphy G."/>
            <person name="Volckaert G."/>
            <person name="Pohl T."/>
            <person name="Duesterhoeft A."/>
            <person name="Stiekema W."/>
            <person name="Entian K.-D."/>
            <person name="Terryn N."/>
            <person name="Harris B."/>
            <person name="Ansorge W."/>
            <person name="Brandt P."/>
            <person name="Grivell L.A."/>
            <person name="Rieger M."/>
            <person name="Weichselgartner M."/>
            <person name="de Simone V."/>
            <person name="Obermaier B."/>
            <person name="Mache R."/>
            <person name="Mueller M."/>
            <person name="Kreis M."/>
            <person name="Delseny M."/>
            <person name="Puigdomenech P."/>
            <person name="Watson M."/>
            <person name="Schmidtheini T."/>
            <person name="Reichert B."/>
            <person name="Portetelle D."/>
            <person name="Perez-Alonso M."/>
            <person name="Boutry M."/>
            <person name="Bancroft I."/>
            <person name="Vos P."/>
            <person name="Hoheisel J."/>
            <person name="Zimmermann W."/>
            <person name="Wedler H."/>
            <person name="Ridley P."/>
            <person name="Langham S.-A."/>
            <person name="McCullagh B."/>
            <person name="Bilham L."/>
            <person name="Robben J."/>
            <person name="van der Schueren J."/>
            <person name="Grymonprez B."/>
            <person name="Chuang Y.-J."/>
            <person name="Vandenbussche F."/>
            <person name="Braeken M."/>
            <person name="Weltjens I."/>
            <person name="Voet M."/>
            <person name="Bastiaens I."/>
            <person name="Aert R."/>
            <person name="Defoor E."/>
            <person name="Weitzenegger T."/>
            <person name="Bothe G."/>
            <person name="Ramsperger U."/>
            <person name="Hilbert H."/>
            <person name="Braun M."/>
            <person name="Holzer E."/>
            <person name="Brandt A."/>
            <person name="Peters S."/>
            <person name="van Staveren M."/>
            <person name="Dirkse W."/>
            <person name="Mooijman P."/>
            <person name="Klein Lankhorst R."/>
            <person name="Rose M."/>
            <person name="Hauf J."/>
            <person name="Koetter P."/>
            <person name="Berneiser S."/>
            <person name="Hempel S."/>
            <person name="Feldpausch M."/>
            <person name="Lamberth S."/>
            <person name="Van den Daele H."/>
            <person name="De Keyser A."/>
            <person name="Buysshaert C."/>
            <person name="Gielen J."/>
            <person name="Villarroel R."/>
            <person name="De Clercq R."/>
            <person name="van Montagu M."/>
            <person name="Rogers J."/>
            <person name="Cronin A."/>
            <person name="Quail M.A."/>
            <person name="Bray-Allen S."/>
            <person name="Clark L."/>
            <person name="Doggett J."/>
            <person name="Hall S."/>
            <person name="Kay M."/>
            <person name="Lennard N."/>
            <person name="McLay K."/>
            <person name="Mayes R."/>
            <person name="Pettett A."/>
            <person name="Rajandream M.A."/>
            <person name="Lyne M."/>
            <person name="Benes V."/>
            <person name="Rechmann S."/>
            <person name="Borkova D."/>
            <person name="Bloecker H."/>
            <person name="Scharfe M."/>
            <person name="Grimm M."/>
            <person name="Loehnert T.-H."/>
            <person name="Dose S."/>
            <person name="de Haan M."/>
            <person name="Maarse A.C."/>
            <person name="Schaefer M."/>
            <person name="Mueller-Auer S."/>
            <person name="Gabel C."/>
            <person name="Fuchs M."/>
            <person name="Fartmann B."/>
            <person name="Granderath K."/>
            <person name="Dauner D."/>
            <person name="Herzl A."/>
            <person name="Neumann S."/>
            <person name="Argiriou A."/>
            <person name="Vitale D."/>
            <person name="Liguori R."/>
            <person name="Piravandi E."/>
            <person name="Massenet O."/>
            <person name="Quigley F."/>
            <person name="Clabauld G."/>
            <person name="Muendlein A."/>
            <person name="Felber R."/>
            <person name="Schnabl S."/>
            <person name="Hiller R."/>
            <person name="Schmidt W."/>
            <person name="Lecharny A."/>
            <person name="Aubourg S."/>
            <person name="Chefdor F."/>
            <person name="Cooke R."/>
            <person name="Berger C."/>
            <person name="Monfort A."/>
            <person name="Casacuberta E."/>
            <person name="Gibbons T."/>
            <person name="Weber N."/>
            <person name="Vandenbol M."/>
            <person name="Bargues M."/>
            <person name="Terol J."/>
            <person name="Torres A."/>
            <person name="Perez-Perez A."/>
            <person name="Purnelle B."/>
            <person name="Bent E."/>
            <person name="Johnson S."/>
            <person name="Tacon D."/>
            <person name="Jesse T."/>
            <person name="Heijnen L."/>
            <person name="Schwarz S."/>
            <person name="Scholler P."/>
            <person name="Heber S."/>
            <person name="Francs P."/>
            <person name="Bielke C."/>
            <person name="Frishman D."/>
            <person name="Haase D."/>
            <person name="Lemcke K."/>
            <person name="Mewes H.-W."/>
            <person name="Stocker S."/>
            <person name="Zaccaria P."/>
            <person name="Bevan M."/>
            <person name="Wilson R.K."/>
            <person name="de la Bastide M."/>
            <person name="Habermann K."/>
            <person name="Parnell L."/>
            <person name="Dedhia N."/>
            <person name="Gnoj L."/>
            <person name="Schutz K."/>
            <person name="Huang E."/>
            <person name="Spiegel L."/>
            <person name="Sekhon M."/>
            <person name="Murray J."/>
            <person name="Sheet P."/>
            <person name="Cordes M."/>
            <person name="Abu-Threideh J."/>
            <person name="Stoneking T."/>
            <person name="Kalicki J."/>
            <person name="Graves T."/>
            <person name="Harmon G."/>
            <person name="Edwards J."/>
            <person name="Latreille P."/>
            <person name="Courtney L."/>
            <person name="Cloud J."/>
            <person name="Abbott A."/>
            <person name="Scott K."/>
            <person name="Johnson D."/>
            <person name="Minx P."/>
            <person name="Bentley D."/>
            <person name="Fulton B."/>
            <person name="Miller N."/>
            <person name="Greco T."/>
            <person name="Kemp K."/>
            <person name="Kramer J."/>
            <person name="Fulton L."/>
            <person name="Mardis E."/>
            <person name="Dante M."/>
            <person name="Pepin K."/>
            <person name="Hillier L.W."/>
            <person name="Nelson J."/>
            <person name="Spieth J."/>
            <person name="Ryan E."/>
            <person name="Andrews S."/>
            <person name="Geisel C."/>
            <person name="Layman D."/>
            <person name="Du H."/>
            <person name="Ali J."/>
            <person name="Berghoff A."/>
            <person name="Jones K."/>
            <person name="Drone K."/>
            <person name="Cotton M."/>
            <person name="Joshu C."/>
            <person name="Antonoiu B."/>
            <person name="Zidanic M."/>
            <person name="Strong C."/>
            <person name="Sun H."/>
            <person name="Lamar B."/>
            <person name="Yordan C."/>
            <person name="Ma P."/>
            <person name="Zhong J."/>
            <person name="Preston R."/>
            <person name="Vil D."/>
            <person name="Shekher M."/>
            <person name="Matero A."/>
            <person name="Shah R."/>
            <person name="Swaby I.K."/>
            <person name="O'Shaughnessy A."/>
            <person name="Rodriguez M."/>
            <person name="Hoffman J."/>
            <person name="Till S."/>
            <person name="Granat S."/>
            <person name="Shohdy N."/>
            <person name="Hasegawa A."/>
            <person name="Hameed A."/>
            <person name="Lodhi M."/>
            <person name="Johnson A."/>
            <person name="Chen E."/>
            <person name="Marra M.A."/>
            <person name="Martienssen R."/>
            <person name="McCombie W.R."/>
        </authorList>
    </citation>
    <scope>NUCLEOTIDE SEQUENCE [LARGE SCALE GENOMIC DNA]</scope>
    <source>
        <strain>cv. Columbia</strain>
    </source>
</reference>
<reference key="2">
    <citation type="journal article" date="2017" name="Plant J.">
        <title>Araport11: a complete reannotation of the Arabidopsis thaliana reference genome.</title>
        <authorList>
            <person name="Cheng C.Y."/>
            <person name="Krishnakumar V."/>
            <person name="Chan A.P."/>
            <person name="Thibaud-Nissen F."/>
            <person name="Schobel S."/>
            <person name="Town C.D."/>
        </authorList>
    </citation>
    <scope>GENOME REANNOTATION</scope>
    <source>
        <strain>cv. Columbia</strain>
    </source>
</reference>
<reference key="3">
    <citation type="journal article" date="2003" name="Science">
        <title>Empirical analysis of transcriptional activity in the Arabidopsis genome.</title>
        <authorList>
            <person name="Yamada K."/>
            <person name="Lim J."/>
            <person name="Dale J.M."/>
            <person name="Chen H."/>
            <person name="Shinn P."/>
            <person name="Palm C.J."/>
            <person name="Southwick A.M."/>
            <person name="Wu H.C."/>
            <person name="Kim C.J."/>
            <person name="Nguyen M."/>
            <person name="Pham P.K."/>
            <person name="Cheuk R.F."/>
            <person name="Karlin-Newmann G."/>
            <person name="Liu S.X."/>
            <person name="Lam B."/>
            <person name="Sakano H."/>
            <person name="Wu T."/>
            <person name="Yu G."/>
            <person name="Miranda M."/>
            <person name="Quach H.L."/>
            <person name="Tripp M."/>
            <person name="Chang C.H."/>
            <person name="Lee J.M."/>
            <person name="Toriumi M.J."/>
            <person name="Chan M.M."/>
            <person name="Tang C.C."/>
            <person name="Onodera C.S."/>
            <person name="Deng J.M."/>
            <person name="Akiyama K."/>
            <person name="Ansari Y."/>
            <person name="Arakawa T."/>
            <person name="Banh J."/>
            <person name="Banno F."/>
            <person name="Bowser L."/>
            <person name="Brooks S.Y."/>
            <person name="Carninci P."/>
            <person name="Chao Q."/>
            <person name="Choy N."/>
            <person name="Enju A."/>
            <person name="Goldsmith A.D."/>
            <person name="Gurjal M."/>
            <person name="Hansen N.F."/>
            <person name="Hayashizaki Y."/>
            <person name="Johnson-Hopson C."/>
            <person name="Hsuan V.W."/>
            <person name="Iida K."/>
            <person name="Karnes M."/>
            <person name="Khan S."/>
            <person name="Koesema E."/>
            <person name="Ishida J."/>
            <person name="Jiang P.X."/>
            <person name="Jones T."/>
            <person name="Kawai J."/>
            <person name="Kamiya A."/>
            <person name="Meyers C."/>
            <person name="Nakajima M."/>
            <person name="Narusaka M."/>
            <person name="Seki M."/>
            <person name="Sakurai T."/>
            <person name="Satou M."/>
            <person name="Tamse R."/>
            <person name="Vaysberg M."/>
            <person name="Wallender E.K."/>
            <person name="Wong C."/>
            <person name="Yamamura Y."/>
            <person name="Yuan S."/>
            <person name="Shinozaki K."/>
            <person name="Davis R.W."/>
            <person name="Theologis A."/>
            <person name="Ecker J.R."/>
        </authorList>
    </citation>
    <scope>NUCLEOTIDE SEQUENCE [LARGE SCALE MRNA]</scope>
    <source>
        <strain>cv. Columbia</strain>
    </source>
</reference>
<reference key="4">
    <citation type="journal article" date="2001" name="J. Biol. Chem.">
        <title>Phylogenetic analysis of the UDP-glycosyltransferase multigene family of Arabidopsis thaliana.</title>
        <authorList>
            <person name="Li Y."/>
            <person name="Baldauf S."/>
            <person name="Lim E.K."/>
            <person name="Bowles D.J."/>
        </authorList>
    </citation>
    <scope>GENE FAMILY</scope>
</reference>
<reference key="5">
    <citation type="journal article" date="2002" name="J. Biol. Chem.">
        <title>The activity of Arabidopsis glycosyltransferases toward salicylic acid, 4-hydroxybenzoic acid, and other benzoates.</title>
        <authorList>
            <person name="Lim E.K."/>
            <person name="Doucet C.J."/>
            <person name="Li Y."/>
            <person name="Elias L."/>
            <person name="Worrall D."/>
            <person name="Spencer S.P."/>
            <person name="Ross J."/>
            <person name="Bowles D.J."/>
        </authorList>
    </citation>
    <scope>FUNCTION</scope>
</reference>
<reference key="6">
    <citation type="journal article" date="2004" name="Biotechnol. Bioeng.">
        <title>Arabidopsis glycosyltransferases as biocatalysts in fermentation for regioselective synthesis of diverse quercetin glucosides.</title>
        <authorList>
            <person name="Lim E.K."/>
            <person name="Ashford D.A."/>
            <person name="Hou B."/>
            <person name="Jackson R.G."/>
            <person name="Bowles D.J."/>
        </authorList>
    </citation>
    <scope>FUNCTION</scope>
</reference>
<reference key="7">
    <citation type="journal article" date="2005" name="Plant Physiol.">
        <title>Pathogen-responsive expression of glycosyltransferase genes UGT73B3 and UGT73B5 is necessary for resistance to Pseudomonas syringae pv tomato in Arabidopsis.</title>
        <authorList>
            <person name="Langlois-Meurinne M."/>
            <person name="Gachon C.M."/>
            <person name="Saindrenan P."/>
        </authorList>
    </citation>
    <scope>FUNCTION</scope>
    <scope>TISSUE SPECIFICITY</scope>
    <scope>DISRUPTION PHENOTYPE</scope>
    <scope>INDUCTION BY PATHOGEN AND SALICYLIC ACID</scope>
</reference>
<sequence>MSSDPHRKLHVVFFPFMAYGHMIPTLDMAKLFSSRGAKSTILTTPLNSKIFQKPIERFKNLNPSFEIDIQIFDFPCVDLGLPEGCENVDFFTSNNNDDRQYLTLKFFKSTRFFKDQLEKLLETTRPDCLIADMFFPWATEAAEKFNVPRLVFHGTGYFSLCSEYCIRVHNPQNIVASRYEPFVIPDLPGNIVITQEQIADRDEESEMGKFMIEVKESDVKSSGVIVNSFYELEPDYADFYKSVVLKRAWHIGPLSVYNRGFEEKAERGKKASINEVECLKWLDSKKPDSVIYISFGSVACFKNEQLFEIAAGLETSGANFIWVVRKNIGIEKEEWLPEGFEERVKGKGMIIRGWAPQVLILDHQATCGFVTHCGWNSLLEGVAAGLPMVTWPVAAEQFYNEKLVTQVLRTGVSVGAKKNVRTTGDFISREKVVKAVREVLVGEEADERRERAKKLAEMAKAAVEGGSSFNDLNSFIEEFTS</sequence>
<name>U73B3_ARATH</name>
<feature type="chain" id="PRO_0000403936" description="UDP-glycosyltransferase 73B3">
    <location>
        <begin position="1"/>
        <end position="481"/>
    </location>
</feature>
<feature type="active site" description="Proton acceptor" evidence="1">
    <location>
        <position position="21"/>
    </location>
</feature>
<feature type="active site" description="Charge relay" evidence="1">
    <location>
        <position position="132"/>
    </location>
</feature>
<feature type="binding site" evidence="2">
    <location>
        <position position="21"/>
    </location>
    <ligand>
        <name>an anthocyanidin</name>
        <dbReference type="ChEBI" id="CHEBI:143576"/>
    </ligand>
</feature>
<feature type="binding site" evidence="1">
    <location>
        <position position="355"/>
    </location>
    <ligand>
        <name>UDP-alpha-D-glucose</name>
        <dbReference type="ChEBI" id="CHEBI:58885"/>
    </ligand>
</feature>
<feature type="binding site" evidence="1">
    <location>
        <position position="357"/>
    </location>
    <ligand>
        <name>UDP-alpha-D-glucose</name>
        <dbReference type="ChEBI" id="CHEBI:58885"/>
    </ligand>
</feature>
<feature type="binding site" evidence="1">
    <location>
        <position position="372"/>
    </location>
    <ligand>
        <name>UDP-alpha-D-glucose</name>
        <dbReference type="ChEBI" id="CHEBI:58885"/>
    </ligand>
</feature>
<feature type="binding site" evidence="1">
    <location>
        <position position="375"/>
    </location>
    <ligand>
        <name>UDP-alpha-D-glucose</name>
        <dbReference type="ChEBI" id="CHEBI:58885"/>
    </ligand>
</feature>
<feature type="binding site" evidence="1">
    <location>
        <position position="376"/>
    </location>
    <ligand>
        <name>UDP-alpha-D-glucose</name>
        <dbReference type="ChEBI" id="CHEBI:58885"/>
    </ligand>
</feature>
<feature type="binding site" evidence="1">
    <location>
        <position position="377"/>
    </location>
    <ligand>
        <name>UDP-alpha-D-glucose</name>
        <dbReference type="ChEBI" id="CHEBI:58885"/>
    </ligand>
</feature>
<feature type="binding site" evidence="1">
    <location>
        <position position="380"/>
    </location>
    <ligand>
        <name>UDP-alpha-D-glucose</name>
        <dbReference type="ChEBI" id="CHEBI:58885"/>
    </ligand>
</feature>
<feature type="binding site" evidence="2">
    <location>
        <position position="395"/>
    </location>
    <ligand>
        <name>an anthocyanidin</name>
        <dbReference type="ChEBI" id="CHEBI:143576"/>
    </ligand>
</feature>
<feature type="binding site" evidence="1">
    <location>
        <position position="396"/>
    </location>
    <ligand>
        <name>UDP-alpha-D-glucose</name>
        <dbReference type="ChEBI" id="CHEBI:58885"/>
    </ligand>
</feature>
<feature type="binding site" evidence="1">
    <location>
        <position position="397"/>
    </location>
    <ligand>
        <name>UDP-alpha-D-glucose</name>
        <dbReference type="ChEBI" id="CHEBI:58885"/>
    </ligand>
</feature>
<protein>
    <recommendedName>
        <fullName>UDP-glycosyltransferase 73B3</fullName>
        <ecNumber>2.4.1.-</ecNumber>
    </recommendedName>
    <alternativeName>
        <fullName>Flavonol 3-O-glucosyltransferase UGT73B3</fullName>
        <ecNumber>2.4.1.91</ecNumber>
    </alternativeName>
</protein>